<name>RS10_JANSC</name>
<protein>
    <recommendedName>
        <fullName evidence="1">Small ribosomal subunit protein uS10</fullName>
    </recommendedName>
    <alternativeName>
        <fullName evidence="2">30S ribosomal protein S10</fullName>
    </alternativeName>
</protein>
<keyword id="KW-1185">Reference proteome</keyword>
<keyword id="KW-0687">Ribonucleoprotein</keyword>
<keyword id="KW-0689">Ribosomal protein</keyword>
<reference key="1">
    <citation type="submission" date="2006-02" db="EMBL/GenBank/DDBJ databases">
        <title>Complete sequence of chromosome of Jannaschia sp. CCS1.</title>
        <authorList>
            <consortium name="US DOE Joint Genome Institute"/>
            <person name="Copeland A."/>
            <person name="Lucas S."/>
            <person name="Lapidus A."/>
            <person name="Barry K."/>
            <person name="Detter J.C."/>
            <person name="Glavina del Rio T."/>
            <person name="Hammon N."/>
            <person name="Israni S."/>
            <person name="Pitluck S."/>
            <person name="Brettin T."/>
            <person name="Bruce D."/>
            <person name="Han C."/>
            <person name="Tapia R."/>
            <person name="Gilna P."/>
            <person name="Chertkov O."/>
            <person name="Saunders E."/>
            <person name="Schmutz J."/>
            <person name="Larimer F."/>
            <person name="Land M."/>
            <person name="Kyrpides N."/>
            <person name="Lykidis A."/>
            <person name="Moran M.A."/>
            <person name="Belas R."/>
            <person name="Ye W."/>
            <person name="Buchan A."/>
            <person name="Gonzalez J.M."/>
            <person name="Schell M.A."/>
            <person name="Richardson P."/>
        </authorList>
    </citation>
    <scope>NUCLEOTIDE SEQUENCE [LARGE SCALE GENOMIC DNA]</scope>
    <source>
        <strain>CCS1</strain>
    </source>
</reference>
<dbReference type="EMBL" id="CP000264">
    <property type="protein sequence ID" value="ABD53499.1"/>
    <property type="molecule type" value="Genomic_DNA"/>
</dbReference>
<dbReference type="RefSeq" id="WP_011453707.1">
    <property type="nucleotide sequence ID" value="NC_007802.1"/>
</dbReference>
<dbReference type="SMR" id="Q28UW3"/>
<dbReference type="STRING" id="290400.Jann_0582"/>
<dbReference type="KEGG" id="jan:Jann_0582"/>
<dbReference type="eggNOG" id="COG0051">
    <property type="taxonomic scope" value="Bacteria"/>
</dbReference>
<dbReference type="HOGENOM" id="CLU_122625_1_3_5"/>
<dbReference type="OrthoDB" id="9804464at2"/>
<dbReference type="Proteomes" id="UP000008326">
    <property type="component" value="Chromosome"/>
</dbReference>
<dbReference type="GO" id="GO:1990904">
    <property type="term" value="C:ribonucleoprotein complex"/>
    <property type="evidence" value="ECO:0007669"/>
    <property type="project" value="UniProtKB-KW"/>
</dbReference>
<dbReference type="GO" id="GO:0005840">
    <property type="term" value="C:ribosome"/>
    <property type="evidence" value="ECO:0007669"/>
    <property type="project" value="UniProtKB-KW"/>
</dbReference>
<dbReference type="GO" id="GO:0003735">
    <property type="term" value="F:structural constituent of ribosome"/>
    <property type="evidence" value="ECO:0007669"/>
    <property type="project" value="InterPro"/>
</dbReference>
<dbReference type="GO" id="GO:0000049">
    <property type="term" value="F:tRNA binding"/>
    <property type="evidence" value="ECO:0007669"/>
    <property type="project" value="UniProtKB-UniRule"/>
</dbReference>
<dbReference type="GO" id="GO:0006412">
    <property type="term" value="P:translation"/>
    <property type="evidence" value="ECO:0007669"/>
    <property type="project" value="UniProtKB-UniRule"/>
</dbReference>
<dbReference type="FunFam" id="3.30.70.600:FF:000001">
    <property type="entry name" value="30S ribosomal protein S10"/>
    <property type="match status" value="1"/>
</dbReference>
<dbReference type="Gene3D" id="3.30.70.600">
    <property type="entry name" value="Ribosomal protein S10 domain"/>
    <property type="match status" value="1"/>
</dbReference>
<dbReference type="HAMAP" id="MF_00508">
    <property type="entry name" value="Ribosomal_uS10"/>
    <property type="match status" value="1"/>
</dbReference>
<dbReference type="InterPro" id="IPR001848">
    <property type="entry name" value="Ribosomal_uS10"/>
</dbReference>
<dbReference type="InterPro" id="IPR027486">
    <property type="entry name" value="Ribosomal_uS10_dom"/>
</dbReference>
<dbReference type="InterPro" id="IPR036838">
    <property type="entry name" value="Ribosomal_uS10_dom_sf"/>
</dbReference>
<dbReference type="NCBIfam" id="NF001861">
    <property type="entry name" value="PRK00596.1"/>
    <property type="match status" value="1"/>
</dbReference>
<dbReference type="NCBIfam" id="TIGR01049">
    <property type="entry name" value="rpsJ_bact"/>
    <property type="match status" value="1"/>
</dbReference>
<dbReference type="PANTHER" id="PTHR11700">
    <property type="entry name" value="30S RIBOSOMAL PROTEIN S10 FAMILY MEMBER"/>
    <property type="match status" value="1"/>
</dbReference>
<dbReference type="Pfam" id="PF00338">
    <property type="entry name" value="Ribosomal_S10"/>
    <property type="match status" value="1"/>
</dbReference>
<dbReference type="PRINTS" id="PR00971">
    <property type="entry name" value="RIBOSOMALS10"/>
</dbReference>
<dbReference type="SMART" id="SM01403">
    <property type="entry name" value="Ribosomal_S10"/>
    <property type="match status" value="1"/>
</dbReference>
<dbReference type="SUPFAM" id="SSF54999">
    <property type="entry name" value="Ribosomal protein S10"/>
    <property type="match status" value="1"/>
</dbReference>
<accession>Q28UW3</accession>
<organism>
    <name type="scientific">Jannaschia sp. (strain CCS1)</name>
    <dbReference type="NCBI Taxonomy" id="290400"/>
    <lineage>
        <taxon>Bacteria</taxon>
        <taxon>Pseudomonadati</taxon>
        <taxon>Pseudomonadota</taxon>
        <taxon>Alphaproteobacteria</taxon>
        <taxon>Rhodobacterales</taxon>
        <taxon>Roseobacteraceae</taxon>
        <taxon>Jannaschia</taxon>
    </lineage>
</organism>
<feature type="chain" id="PRO_0000258552" description="Small ribosomal subunit protein uS10">
    <location>
        <begin position="1"/>
        <end position="103"/>
    </location>
</feature>
<sequence>MAVSQNIRIRLKAFDYRVLDASTQEIVNTAKRTGAQVRGPIPLPNKIEKFTVLRGPHVDKKSRDQWEIRTHKRLLDIVDPTPQTVDALMKLDLAAGVDVEIKV</sequence>
<evidence type="ECO:0000255" key="1">
    <source>
        <dbReference type="HAMAP-Rule" id="MF_00508"/>
    </source>
</evidence>
<evidence type="ECO:0000305" key="2"/>
<gene>
    <name evidence="1" type="primary">rpsJ</name>
    <name type="ordered locus">Jann_0582</name>
</gene>
<comment type="function">
    <text evidence="1">Involved in the binding of tRNA to the ribosomes.</text>
</comment>
<comment type="subunit">
    <text evidence="1">Part of the 30S ribosomal subunit.</text>
</comment>
<comment type="similarity">
    <text evidence="1">Belongs to the universal ribosomal protein uS10 family.</text>
</comment>
<proteinExistence type="inferred from homology"/>